<sequence length="688" mass="77054">MDGSFVQHSVRVLQELNKQREKGQYCDATLDVGGLVFKAHWSVLACCSHFFQSLYGDGSGGSVVLPAGFAEIFGLLLDFFYTGHLALTSGNRDQVLLAARELRVPEAVELCQSFKPKTSVGQAAGGQSGLGPPASQNVNSHVKEPAGLEEEEVSRTLGLVPRDQEPRGSHSPQRPQLHSPAQSEGPSSLCGKLKQALKPCPLEDKKPEDCKVPPRPLEAEGAQLQGGSNEWEVVVQVEDDGDGDYMSEPEAVLTRRKSNVIRKPCAAEPALSAGSLAAEPAENRKGTAVPVECPTCHKKFLSKYYLKVHNRKHTGEKPFECPKCGKCYFRKENLLEHEARNCMNRSEQVFTCSVCQETFRRRMELRVHMVSHTGEMPYKCSSCSQQFMQKKDLQSHMIKLHGAPKPHACPTCAKCFLSRTELQLHEAFKHRGEKLFVCEECGHRASSRNGLQMHIKAKHRNERPHVCEFCSHAFTQKANLNMHLRTHTGEKPFQCHLCGKTFRTQASLDKHNRTHTGERPFSCEFCEQRFTEKGPLLRHVASRHQEGRPHFCQICGKTFKAVEQLRVHVRRHKGVRKFECTECGYKFTRQAHLRRHMEIHDRVENYNPRQRKLRNLIIEDEKMVVVALQPPAELEVGSAEVIVESLAQGGLASQLPGQRLCAEESFTGPGVLEPSLIITAAVPEDCDT</sequence>
<accession>P10074</accession>
<accession>Q5SY19</accession>
<organism>
    <name type="scientific">Homo sapiens</name>
    <name type="common">Human</name>
    <dbReference type="NCBI Taxonomy" id="9606"/>
    <lineage>
        <taxon>Eukaryota</taxon>
        <taxon>Metazoa</taxon>
        <taxon>Chordata</taxon>
        <taxon>Craniata</taxon>
        <taxon>Vertebrata</taxon>
        <taxon>Euteleostomi</taxon>
        <taxon>Mammalia</taxon>
        <taxon>Eutheria</taxon>
        <taxon>Euarchontoglires</taxon>
        <taxon>Primates</taxon>
        <taxon>Haplorrhini</taxon>
        <taxon>Catarrhini</taxon>
        <taxon>Hominidae</taxon>
        <taxon>Homo</taxon>
    </lineage>
</organism>
<protein>
    <recommendedName>
        <fullName evidence="16">Zinc finger and BTB domain-containing protein 48</fullName>
    </recommendedName>
    <alternativeName>
        <fullName evidence="13">Krueppel-related zinc finger protein 3</fullName>
        <shortName evidence="14">hKR3</shortName>
    </alternativeName>
    <alternativeName>
        <fullName evidence="12">Telomere zinc finger-associated protein</fullName>
        <shortName evidence="12">TZAP</shortName>
    </alternativeName>
    <alternativeName>
        <fullName>Telomere-binding protein and transcriptional activator ZBTB48</fullName>
    </alternativeName>
    <alternativeName>
        <fullName evidence="16">Zinc finger protein 855</fullName>
    </alternativeName>
</protein>
<keyword id="KW-0002">3D-structure</keyword>
<keyword id="KW-0010">Activator</keyword>
<keyword id="KW-0158">Chromosome</keyword>
<keyword id="KW-0238">DNA-binding</keyword>
<keyword id="KW-1017">Isopeptide bond</keyword>
<keyword id="KW-0479">Metal-binding</keyword>
<keyword id="KW-0539">Nucleus</keyword>
<keyword id="KW-0597">Phosphoprotein</keyword>
<keyword id="KW-1267">Proteomics identification</keyword>
<keyword id="KW-1185">Reference proteome</keyword>
<keyword id="KW-0677">Repeat</keyword>
<keyword id="KW-0694">RNA-binding</keyword>
<keyword id="KW-0779">Telomere</keyword>
<keyword id="KW-0804">Transcription</keyword>
<keyword id="KW-0805">Transcription regulation</keyword>
<keyword id="KW-0832">Ubl conjugation</keyword>
<keyword id="KW-0862">Zinc</keyword>
<keyword id="KW-0863">Zinc-finger</keyword>
<evidence type="ECO:0000250" key="1">
    <source>
        <dbReference type="UniProtKB" id="Q1H9T6"/>
    </source>
</evidence>
<evidence type="ECO:0000255" key="2">
    <source>
        <dbReference type="PROSITE-ProRule" id="PRU00037"/>
    </source>
</evidence>
<evidence type="ECO:0000255" key="3">
    <source>
        <dbReference type="PROSITE-ProRule" id="PRU00042"/>
    </source>
</evidence>
<evidence type="ECO:0000256" key="4">
    <source>
        <dbReference type="SAM" id="MobiDB-lite"/>
    </source>
</evidence>
<evidence type="ECO:0000269" key="5">
    <source>
    </source>
</evidence>
<evidence type="ECO:0000269" key="6">
    <source>
    </source>
</evidence>
<evidence type="ECO:0000269" key="7">
    <source>
    </source>
</evidence>
<evidence type="ECO:0000269" key="8">
    <source>
    </source>
</evidence>
<evidence type="ECO:0000269" key="9">
    <source>
    </source>
</evidence>
<evidence type="ECO:0000269" key="10">
    <source>
    </source>
</evidence>
<evidence type="ECO:0000269" key="11">
    <source>
    </source>
</evidence>
<evidence type="ECO:0000303" key="12">
    <source>
    </source>
</evidence>
<evidence type="ECO:0000303" key="13">
    <source>
    </source>
</evidence>
<evidence type="ECO:0000303" key="14">
    <source ref="12"/>
</evidence>
<evidence type="ECO:0000305" key="15"/>
<evidence type="ECO:0000312" key="16">
    <source>
        <dbReference type="HGNC" id="HGNC:4930"/>
    </source>
</evidence>
<evidence type="ECO:0007744" key="17">
    <source>
        <dbReference type="PDB" id="5YJ3"/>
    </source>
</evidence>
<evidence type="ECO:0007744" key="18">
    <source>
    </source>
</evidence>
<evidence type="ECO:0007744" key="19">
    <source>
    </source>
</evidence>
<evidence type="ECO:0007829" key="20">
    <source>
        <dbReference type="PDB" id="3B84"/>
    </source>
</evidence>
<evidence type="ECO:0007829" key="21">
    <source>
        <dbReference type="PDB" id="5YJ3"/>
    </source>
</evidence>
<feature type="chain" id="PRO_0000047272" description="Zinc finger and BTB domain-containing protein 48">
    <location>
        <begin position="1"/>
        <end position="688"/>
    </location>
</feature>
<feature type="domain" description="BTB" evidence="2">
    <location>
        <begin position="26"/>
        <end position="89"/>
    </location>
</feature>
<feature type="zinc finger region" description="C2H2-type 1" evidence="3">
    <location>
        <begin position="291"/>
        <end position="313"/>
    </location>
</feature>
<feature type="zinc finger region" description="CCHC-type" evidence="1">
    <location>
        <begin position="319"/>
        <end position="344"/>
    </location>
</feature>
<feature type="zinc finger region" description="C2H2-type 2" evidence="3">
    <location>
        <begin position="350"/>
        <end position="372"/>
    </location>
</feature>
<feature type="zinc finger region" description="C2H2-type 3" evidence="3">
    <location>
        <begin position="378"/>
        <end position="401"/>
    </location>
</feature>
<feature type="zinc finger region" description="C2H2-type 4" evidence="3">
    <location>
        <begin position="407"/>
        <end position="430"/>
    </location>
</feature>
<feature type="zinc finger region" description="C2H2-type 5" evidence="3">
    <location>
        <begin position="436"/>
        <end position="459"/>
    </location>
</feature>
<feature type="zinc finger region" description="C2H2-type 6" evidence="3">
    <location>
        <begin position="465"/>
        <end position="487"/>
    </location>
</feature>
<feature type="zinc finger region" description="C2H2-type 7" evidence="3">
    <location>
        <begin position="493"/>
        <end position="515"/>
    </location>
</feature>
<feature type="zinc finger region" description="C2H2-type 8" evidence="3">
    <location>
        <begin position="521"/>
        <end position="544"/>
    </location>
</feature>
<feature type="zinc finger region" description="C2H2-type 9" evidence="3">
    <location>
        <begin position="550"/>
        <end position="572"/>
    </location>
</feature>
<feature type="zinc finger region" description="C2H2-type 10" evidence="3">
    <location>
        <begin position="578"/>
        <end position="600"/>
    </location>
</feature>
<feature type="region of interest" description="Disordered" evidence="4">
    <location>
        <begin position="119"/>
        <end position="140"/>
    </location>
</feature>
<feature type="region of interest" description="Disordered" evidence="4">
    <location>
        <begin position="161"/>
        <end position="192"/>
    </location>
</feature>
<feature type="compositionally biased region" description="Polar residues" evidence="4">
    <location>
        <begin position="170"/>
        <end position="186"/>
    </location>
</feature>
<feature type="binding site" evidence="1">
    <location>
        <position position="293"/>
    </location>
    <ligand>
        <name>Zn(2+)</name>
        <dbReference type="ChEBI" id="CHEBI:29105"/>
        <label>1</label>
    </ligand>
</feature>
<feature type="binding site" evidence="1">
    <location>
        <position position="296"/>
    </location>
    <ligand>
        <name>Zn(2+)</name>
        <dbReference type="ChEBI" id="CHEBI:29105"/>
        <label>1</label>
    </ligand>
</feature>
<feature type="binding site" evidence="1">
    <location>
        <position position="309"/>
    </location>
    <ligand>
        <name>Zn(2+)</name>
        <dbReference type="ChEBI" id="CHEBI:29105"/>
        <label>1</label>
    </ligand>
</feature>
<feature type="binding site" evidence="1">
    <location>
        <position position="313"/>
    </location>
    <ligand>
        <name>Zn(2+)</name>
        <dbReference type="ChEBI" id="CHEBI:29105"/>
        <label>1</label>
    </ligand>
</feature>
<feature type="binding site" evidence="1">
    <location>
        <position position="321"/>
    </location>
    <ligand>
        <name>Zn(2+)</name>
        <dbReference type="ChEBI" id="CHEBI:29105"/>
        <label>2</label>
    </ligand>
</feature>
<feature type="binding site" evidence="1">
    <location>
        <position position="324"/>
    </location>
    <ligand>
        <name>Zn(2+)</name>
        <dbReference type="ChEBI" id="CHEBI:29105"/>
        <label>2</label>
    </ligand>
</feature>
<feature type="binding site" evidence="1">
    <location>
        <position position="337"/>
    </location>
    <ligand>
        <name>Zn(2+)</name>
        <dbReference type="ChEBI" id="CHEBI:29105"/>
        <label>2</label>
    </ligand>
</feature>
<feature type="binding site" evidence="1">
    <location>
        <position position="342"/>
    </location>
    <ligand>
        <name>Zn(2+)</name>
        <dbReference type="ChEBI" id="CHEBI:29105"/>
        <label>2</label>
    </ligand>
</feature>
<feature type="binding site" evidence="1">
    <location>
        <position position="352"/>
    </location>
    <ligand>
        <name>Zn(2+)</name>
        <dbReference type="ChEBI" id="CHEBI:29105"/>
        <label>3</label>
    </ligand>
</feature>
<feature type="binding site" evidence="1">
    <location>
        <position position="355"/>
    </location>
    <ligand>
        <name>Zn(2+)</name>
        <dbReference type="ChEBI" id="CHEBI:29105"/>
        <label>3</label>
    </ligand>
</feature>
<feature type="binding site" evidence="1">
    <location>
        <position position="368"/>
    </location>
    <ligand>
        <name>Zn(2+)</name>
        <dbReference type="ChEBI" id="CHEBI:29105"/>
        <label>3</label>
    </ligand>
</feature>
<feature type="binding site" evidence="1">
    <location>
        <position position="372"/>
    </location>
    <ligand>
        <name>Zn(2+)</name>
        <dbReference type="ChEBI" id="CHEBI:29105"/>
        <label>3</label>
    </ligand>
</feature>
<feature type="binding site" evidence="1">
    <location>
        <position position="380"/>
    </location>
    <ligand>
        <name>Zn(2+)</name>
        <dbReference type="ChEBI" id="CHEBI:29105"/>
        <label>4</label>
    </ligand>
</feature>
<feature type="binding site" evidence="1">
    <location>
        <position position="383"/>
    </location>
    <ligand>
        <name>Zn(2+)</name>
        <dbReference type="ChEBI" id="CHEBI:29105"/>
        <label>4</label>
    </ligand>
</feature>
<feature type="binding site" evidence="1">
    <location>
        <position position="396"/>
    </location>
    <ligand>
        <name>Zn(2+)</name>
        <dbReference type="ChEBI" id="CHEBI:29105"/>
        <label>4</label>
    </ligand>
</feature>
<feature type="binding site" evidence="1">
    <location>
        <position position="401"/>
    </location>
    <ligand>
        <name>Zn(2+)</name>
        <dbReference type="ChEBI" id="CHEBI:29105"/>
        <label>4</label>
    </ligand>
</feature>
<feature type="binding site" evidence="9 17">
    <location>
        <position position="552"/>
    </location>
    <ligand>
        <name>Zn(2+)</name>
        <dbReference type="ChEBI" id="CHEBI:29105"/>
        <label>5</label>
    </ligand>
</feature>
<feature type="binding site" evidence="9 17">
    <location>
        <position position="555"/>
    </location>
    <ligand>
        <name>Zn(2+)</name>
        <dbReference type="ChEBI" id="CHEBI:29105"/>
        <label>5</label>
    </ligand>
</feature>
<feature type="binding site" evidence="9 17">
    <location>
        <position position="568"/>
    </location>
    <ligand>
        <name>Zn(2+)</name>
        <dbReference type="ChEBI" id="CHEBI:29105"/>
        <label>5</label>
    </ligand>
</feature>
<feature type="binding site" evidence="9 17">
    <location>
        <position position="580"/>
    </location>
    <ligand>
        <name>Zn(2+)</name>
        <dbReference type="ChEBI" id="CHEBI:29105"/>
        <label>6</label>
    </ligand>
</feature>
<feature type="binding site" evidence="9 17">
    <location>
        <position position="583"/>
    </location>
    <ligand>
        <name>Zn(2+)</name>
        <dbReference type="ChEBI" id="CHEBI:29105"/>
        <label>6</label>
    </ligand>
</feature>
<feature type="binding site" evidence="9 17">
    <location>
        <position position="596"/>
    </location>
    <ligand>
        <name>Zn(2+)</name>
        <dbReference type="ChEBI" id="CHEBI:29105"/>
        <label>5</label>
    </ligand>
</feature>
<feature type="binding site" evidence="9 17">
    <location>
        <position position="596"/>
    </location>
    <ligand>
        <name>Zn(2+)</name>
        <dbReference type="ChEBI" id="CHEBI:29105"/>
        <label>6</label>
    </ligand>
</feature>
<feature type="binding site" evidence="9 17">
    <location>
        <position position="600"/>
    </location>
    <ligand>
        <name>Zn(2+)</name>
        <dbReference type="ChEBI" id="CHEBI:29105"/>
        <label>6</label>
    </ligand>
</feature>
<feature type="modified residue" description="Phosphoserine" evidence="18">
    <location>
        <position position="169"/>
    </location>
</feature>
<feature type="modified residue" description="Phosphoserine" evidence="18">
    <location>
        <position position="171"/>
    </location>
</feature>
<feature type="modified residue" description="Phosphoserine" evidence="18">
    <location>
        <position position="179"/>
    </location>
</feature>
<feature type="cross-link" description="Glycyl lysine isopeptide (Lys-Gly) (interchain with G-Cter in SUMO2)" evidence="19">
    <location>
        <position position="143"/>
    </location>
</feature>
<feature type="cross-link" description="Glycyl lysine isopeptide (Lys-Gly) (interchain with G-Cter in SUMO2)" evidence="19">
    <location>
        <position position="263"/>
    </location>
</feature>
<feature type="sequence variant" id="VAR_052925" description="In dbSNP:rs2229330.">
    <original>S</original>
    <variation>A</variation>
    <location>
        <position position="675"/>
    </location>
</feature>
<feature type="mutagenesis site" description="Abolishes binding to the telomeric double-stranded 5'-TTAGGG-3' repeat." evidence="7">
    <original>H</original>
    <variation>A</variation>
    <location>
        <position position="596"/>
    </location>
</feature>
<feature type="sequence conflict" description="In Ref. 1; AAA65124." evidence="15" ref="1">
    <original>P</original>
    <variation>S</variation>
    <location>
        <position position="201"/>
    </location>
</feature>
<feature type="sequence conflict" description="In Ref. 1; AAA65124." evidence="15" ref="1">
    <original>D</original>
    <variation>S</variation>
    <location>
        <position position="244"/>
    </location>
</feature>
<feature type="sequence conflict" description="In Ref. 1; AAA65124." evidence="15" ref="1">
    <original>FT</original>
    <variation>LP</variation>
    <location>
        <begin position="350"/>
        <end position="351"/>
    </location>
</feature>
<feature type="sequence conflict" description="In Ref. 1; AAA65124." evidence="15" ref="1">
    <original>N</original>
    <variation>K</variation>
    <location>
        <position position="607"/>
    </location>
</feature>
<feature type="helix" evidence="20">
    <location>
        <begin position="5"/>
        <end position="22"/>
    </location>
</feature>
<feature type="strand" evidence="20">
    <location>
        <begin position="28"/>
        <end position="32"/>
    </location>
</feature>
<feature type="strand" evidence="20">
    <location>
        <begin position="35"/>
        <end position="39"/>
    </location>
</feature>
<feature type="helix" evidence="20">
    <location>
        <begin position="41"/>
        <end position="47"/>
    </location>
</feature>
<feature type="helix" evidence="20">
    <location>
        <begin position="49"/>
        <end position="55"/>
    </location>
</feature>
<feature type="turn" evidence="20">
    <location>
        <begin position="56"/>
        <end position="59"/>
    </location>
</feature>
<feature type="strand" evidence="20">
    <location>
        <begin position="63"/>
        <end position="65"/>
    </location>
</feature>
<feature type="helix" evidence="20">
    <location>
        <begin position="67"/>
        <end position="69"/>
    </location>
</feature>
<feature type="helix" evidence="20">
    <location>
        <begin position="70"/>
        <end position="82"/>
    </location>
</feature>
<feature type="turn" evidence="20">
    <location>
        <begin position="89"/>
        <end position="91"/>
    </location>
</feature>
<feature type="helix" evidence="20">
    <location>
        <begin position="92"/>
        <end position="101"/>
    </location>
</feature>
<feature type="helix" evidence="20">
    <location>
        <begin position="105"/>
        <end position="113"/>
    </location>
</feature>
<feature type="strand" evidence="21">
    <location>
        <begin position="553"/>
        <end position="555"/>
    </location>
</feature>
<feature type="strand" evidence="21">
    <location>
        <begin position="558"/>
        <end position="562"/>
    </location>
</feature>
<feature type="helix" evidence="21">
    <location>
        <begin position="563"/>
        <end position="570"/>
    </location>
</feature>
<feature type="turn" evidence="21">
    <location>
        <begin position="581"/>
        <end position="583"/>
    </location>
</feature>
<feature type="strand" evidence="21">
    <location>
        <begin position="586"/>
        <end position="589"/>
    </location>
</feature>
<feature type="helix" evidence="21">
    <location>
        <begin position="590"/>
        <end position="600"/>
    </location>
</feature>
<dbReference type="EMBL" id="L16896">
    <property type="protein sequence ID" value="AAA65124.1"/>
    <property type="molecule type" value="mRNA"/>
</dbReference>
<dbReference type="EMBL" id="U45325">
    <property type="protein sequence ID" value="AAB08973.1"/>
    <property type="molecule type" value="Genomic_DNA"/>
</dbReference>
<dbReference type="EMBL" id="U45324">
    <property type="protein sequence ID" value="AAB08973.1"/>
    <property type="status" value="JOINED"/>
    <property type="molecule type" value="Genomic_DNA"/>
</dbReference>
<dbReference type="EMBL" id="AL591866">
    <property type="status" value="NOT_ANNOTATED_CDS"/>
    <property type="molecule type" value="Genomic_DNA"/>
</dbReference>
<dbReference type="EMBL" id="BC013573">
    <property type="protein sequence ID" value="AAH13573.1"/>
    <property type="molecule type" value="mRNA"/>
</dbReference>
<dbReference type="EMBL" id="M20677">
    <property type="protein sequence ID" value="AAA35989.1"/>
    <property type="molecule type" value="Genomic_DNA"/>
</dbReference>
<dbReference type="CCDS" id="CCDS84.1"/>
<dbReference type="PIR" id="A56360">
    <property type="entry name" value="A56360"/>
</dbReference>
<dbReference type="RefSeq" id="NP_001265576.1">
    <property type="nucleotide sequence ID" value="NM_001278647.2"/>
</dbReference>
<dbReference type="RefSeq" id="NP_001265577.1">
    <property type="nucleotide sequence ID" value="NM_001278648.2"/>
</dbReference>
<dbReference type="RefSeq" id="NP_005332.1">
    <property type="nucleotide sequence ID" value="NM_005341.4"/>
</dbReference>
<dbReference type="RefSeq" id="XP_047274820.1">
    <property type="nucleotide sequence ID" value="XM_047418864.1"/>
</dbReference>
<dbReference type="PDB" id="3B84">
    <property type="method" value="X-ray"/>
    <property type="resolution" value="1.74 A"/>
    <property type="chains" value="A=4-120"/>
</dbReference>
<dbReference type="PDB" id="5YJ3">
    <property type="method" value="X-ray"/>
    <property type="resolution" value="2.85 A"/>
    <property type="chains" value="C/D=516-620"/>
</dbReference>
<dbReference type="PDBsum" id="3B84"/>
<dbReference type="PDBsum" id="5YJ3"/>
<dbReference type="SMR" id="P10074"/>
<dbReference type="BioGRID" id="109349">
    <property type="interactions" value="148"/>
</dbReference>
<dbReference type="FunCoup" id="P10074">
    <property type="interactions" value="425"/>
</dbReference>
<dbReference type="IntAct" id="P10074">
    <property type="interactions" value="126"/>
</dbReference>
<dbReference type="MINT" id="P10074"/>
<dbReference type="STRING" id="9606.ENSP00000366902"/>
<dbReference type="ChEMBL" id="CHEMBL5069366"/>
<dbReference type="GlyGen" id="P10074">
    <property type="glycosylation" value="3 sites, 1 O-linked glycan (3 sites)"/>
</dbReference>
<dbReference type="iPTMnet" id="P10074"/>
<dbReference type="PhosphoSitePlus" id="P10074"/>
<dbReference type="BioMuta" id="ZBTB48"/>
<dbReference type="DMDM" id="1708212"/>
<dbReference type="jPOST" id="P10074"/>
<dbReference type="MassIVE" id="P10074"/>
<dbReference type="PaxDb" id="9606-ENSP00000366902"/>
<dbReference type="PeptideAtlas" id="P10074"/>
<dbReference type="ProteomicsDB" id="52561"/>
<dbReference type="Pumba" id="P10074"/>
<dbReference type="Antibodypedia" id="13109">
    <property type="antibodies" value="144 antibodies from 28 providers"/>
</dbReference>
<dbReference type="DNASU" id="3104"/>
<dbReference type="Ensembl" id="ENST00000377674.9">
    <property type="protein sequence ID" value="ENSP00000366902.4"/>
    <property type="gene ID" value="ENSG00000204859.13"/>
</dbReference>
<dbReference type="GeneID" id="3104"/>
<dbReference type="KEGG" id="hsa:3104"/>
<dbReference type="MANE-Select" id="ENST00000377674.9">
    <property type="protein sequence ID" value="ENSP00000366902.4"/>
    <property type="RefSeq nucleotide sequence ID" value="NM_005341.4"/>
    <property type="RefSeq protein sequence ID" value="NP_005332.1"/>
</dbReference>
<dbReference type="UCSC" id="uc001anx.5">
    <property type="organism name" value="human"/>
</dbReference>
<dbReference type="AGR" id="HGNC:4930"/>
<dbReference type="CTD" id="3104"/>
<dbReference type="DisGeNET" id="3104"/>
<dbReference type="GeneCards" id="ZBTB48"/>
<dbReference type="HGNC" id="HGNC:4930">
    <property type="gene designation" value="ZBTB48"/>
</dbReference>
<dbReference type="HPA" id="ENSG00000204859">
    <property type="expression patterns" value="Low tissue specificity"/>
</dbReference>
<dbReference type="MIM" id="165270">
    <property type="type" value="gene"/>
</dbReference>
<dbReference type="neXtProt" id="NX_P10074"/>
<dbReference type="OpenTargets" id="ENSG00000204859"/>
<dbReference type="PharmGKB" id="PA162409481"/>
<dbReference type="VEuPathDB" id="HostDB:ENSG00000204859"/>
<dbReference type="eggNOG" id="KOG1721">
    <property type="taxonomic scope" value="Eukaryota"/>
</dbReference>
<dbReference type="GeneTree" id="ENSGT00940000158981"/>
<dbReference type="HOGENOM" id="CLU_002678_70_0_1"/>
<dbReference type="InParanoid" id="P10074"/>
<dbReference type="OMA" id="EPPGNRK"/>
<dbReference type="OrthoDB" id="3156061at2759"/>
<dbReference type="PAN-GO" id="P10074">
    <property type="GO annotations" value="3 GO annotations based on evolutionary models"/>
</dbReference>
<dbReference type="PhylomeDB" id="P10074"/>
<dbReference type="TreeFam" id="TF331310"/>
<dbReference type="PathwayCommons" id="P10074"/>
<dbReference type="SignaLink" id="P10074"/>
<dbReference type="BioGRID-ORCS" id="3104">
    <property type="hits" value="14 hits in 1217 CRISPR screens"/>
</dbReference>
<dbReference type="ChiTaRS" id="ZBTB48">
    <property type="organism name" value="human"/>
</dbReference>
<dbReference type="EvolutionaryTrace" id="P10074"/>
<dbReference type="GenomeRNAi" id="3104"/>
<dbReference type="Pharos" id="P10074">
    <property type="development level" value="Tbio"/>
</dbReference>
<dbReference type="PRO" id="PR:P10074"/>
<dbReference type="Proteomes" id="UP000005640">
    <property type="component" value="Chromosome 1"/>
</dbReference>
<dbReference type="RNAct" id="P10074">
    <property type="molecule type" value="protein"/>
</dbReference>
<dbReference type="Bgee" id="ENSG00000204859">
    <property type="expression patterns" value="Expressed in right lobe of liver and 129 other cell types or tissues"/>
</dbReference>
<dbReference type="ExpressionAtlas" id="P10074">
    <property type="expression patterns" value="baseline and differential"/>
</dbReference>
<dbReference type="GO" id="GO:0000781">
    <property type="term" value="C:chromosome, telomeric region"/>
    <property type="evidence" value="ECO:0000314"/>
    <property type="project" value="UniProtKB"/>
</dbReference>
<dbReference type="GO" id="GO:0005634">
    <property type="term" value="C:nucleus"/>
    <property type="evidence" value="ECO:0007669"/>
    <property type="project" value="UniProtKB-SubCell"/>
</dbReference>
<dbReference type="GO" id="GO:0003700">
    <property type="term" value="F:DNA-binding transcription factor activity"/>
    <property type="evidence" value="ECO:0000318"/>
    <property type="project" value="GO_Central"/>
</dbReference>
<dbReference type="GO" id="GO:0003691">
    <property type="term" value="F:double-stranded telomeric DNA binding"/>
    <property type="evidence" value="ECO:0000314"/>
    <property type="project" value="UniProtKB"/>
</dbReference>
<dbReference type="GO" id="GO:0042802">
    <property type="term" value="F:identical protein binding"/>
    <property type="evidence" value="ECO:0000353"/>
    <property type="project" value="IntAct"/>
</dbReference>
<dbReference type="GO" id="GO:0003723">
    <property type="term" value="F:RNA binding"/>
    <property type="evidence" value="ECO:0000314"/>
    <property type="project" value="UniProtKB"/>
</dbReference>
<dbReference type="GO" id="GO:0000978">
    <property type="term" value="F:RNA polymerase II cis-regulatory region sequence-specific DNA binding"/>
    <property type="evidence" value="ECO:0000318"/>
    <property type="project" value="GO_Central"/>
</dbReference>
<dbReference type="GO" id="GO:0000976">
    <property type="term" value="F:transcription cis-regulatory region binding"/>
    <property type="evidence" value="ECO:0000314"/>
    <property type="project" value="UniProtKB"/>
</dbReference>
<dbReference type="GO" id="GO:0008270">
    <property type="term" value="F:zinc ion binding"/>
    <property type="evidence" value="ECO:0000314"/>
    <property type="project" value="UniProtKB"/>
</dbReference>
<dbReference type="GO" id="GO:0045893">
    <property type="term" value="P:positive regulation of DNA-templated transcription"/>
    <property type="evidence" value="ECO:0000315"/>
    <property type="project" value="UniProtKB"/>
</dbReference>
<dbReference type="GO" id="GO:0051252">
    <property type="term" value="P:regulation of RNA metabolic process"/>
    <property type="evidence" value="ECO:0000315"/>
    <property type="project" value="UniProtKB"/>
</dbReference>
<dbReference type="GO" id="GO:0006357">
    <property type="term" value="P:regulation of transcription by RNA polymerase II"/>
    <property type="evidence" value="ECO:0000318"/>
    <property type="project" value="GO_Central"/>
</dbReference>
<dbReference type="GO" id="GO:0010833">
    <property type="term" value="P:telomere maintenance via telomere lengthening"/>
    <property type="evidence" value="ECO:0000315"/>
    <property type="project" value="UniProtKB"/>
</dbReference>
<dbReference type="CDD" id="cd18232">
    <property type="entry name" value="BTB_POZ_ZBTB48_TZAP_KR3"/>
    <property type="match status" value="1"/>
</dbReference>
<dbReference type="FunFam" id="3.30.160.60:FF:000657">
    <property type="entry name" value="GDNF inducible zinc finger protein 1"/>
    <property type="match status" value="1"/>
</dbReference>
<dbReference type="FunFam" id="3.30.160.60:FF:001732">
    <property type="entry name" value="Zgc:162936"/>
    <property type="match status" value="1"/>
</dbReference>
<dbReference type="FunFam" id="3.30.160.60:FF:001113">
    <property type="entry name" value="Zinc finger and BTB domain containing 48"/>
    <property type="match status" value="1"/>
</dbReference>
<dbReference type="FunFam" id="3.30.160.60:FF:001117">
    <property type="entry name" value="Zinc finger and BTB domain containing 48"/>
    <property type="match status" value="1"/>
</dbReference>
<dbReference type="FunFam" id="3.30.160.60:FF:000809">
    <property type="entry name" value="Zinc finger and BTB domain-containing 48"/>
    <property type="match status" value="1"/>
</dbReference>
<dbReference type="FunFam" id="3.30.160.60:FF:001252">
    <property type="entry name" value="Zinc finger and BTB domain-containing 48"/>
    <property type="match status" value="1"/>
</dbReference>
<dbReference type="FunFam" id="3.30.160.60:FF:001257">
    <property type="entry name" value="Zinc finger and BTB domain-containing 48"/>
    <property type="match status" value="1"/>
</dbReference>
<dbReference type="FunFam" id="3.30.710.10:FF:000074">
    <property type="entry name" value="Zinc finger and BTB domain-containing 48"/>
    <property type="match status" value="1"/>
</dbReference>
<dbReference type="Gene3D" id="3.30.160.60">
    <property type="entry name" value="Classic Zinc Finger"/>
    <property type="match status" value="10"/>
</dbReference>
<dbReference type="Gene3D" id="3.30.710.10">
    <property type="entry name" value="Potassium Channel Kv1.1, Chain A"/>
    <property type="match status" value="1"/>
</dbReference>
<dbReference type="InterPro" id="IPR000210">
    <property type="entry name" value="BTB/POZ_dom"/>
</dbReference>
<dbReference type="InterPro" id="IPR011333">
    <property type="entry name" value="SKP1/BTB/POZ_sf"/>
</dbReference>
<dbReference type="InterPro" id="IPR050758">
    <property type="entry name" value="Znf_C2H2-type"/>
</dbReference>
<dbReference type="InterPro" id="IPR036236">
    <property type="entry name" value="Znf_C2H2_sf"/>
</dbReference>
<dbReference type="InterPro" id="IPR013087">
    <property type="entry name" value="Znf_C2H2_type"/>
</dbReference>
<dbReference type="PANTHER" id="PTHR23234:SF10">
    <property type="entry name" value="RIKEN CDNA 6720489N17 GENE-RELATED"/>
    <property type="match status" value="1"/>
</dbReference>
<dbReference type="PANTHER" id="PTHR23234">
    <property type="entry name" value="ZNF44 PROTEIN"/>
    <property type="match status" value="1"/>
</dbReference>
<dbReference type="Pfam" id="PF00651">
    <property type="entry name" value="BTB"/>
    <property type="match status" value="1"/>
</dbReference>
<dbReference type="Pfam" id="PF00096">
    <property type="entry name" value="zf-C2H2"/>
    <property type="match status" value="6"/>
</dbReference>
<dbReference type="SMART" id="SM00225">
    <property type="entry name" value="BTB"/>
    <property type="match status" value="1"/>
</dbReference>
<dbReference type="SMART" id="SM00355">
    <property type="entry name" value="ZnF_C2H2"/>
    <property type="match status" value="11"/>
</dbReference>
<dbReference type="SUPFAM" id="SSF57667">
    <property type="entry name" value="beta-beta-alpha zinc fingers"/>
    <property type="match status" value="6"/>
</dbReference>
<dbReference type="SUPFAM" id="SSF54695">
    <property type="entry name" value="POZ domain"/>
    <property type="match status" value="1"/>
</dbReference>
<dbReference type="PROSITE" id="PS50097">
    <property type="entry name" value="BTB"/>
    <property type="match status" value="1"/>
</dbReference>
<dbReference type="PROSITE" id="PS00028">
    <property type="entry name" value="ZINC_FINGER_C2H2_1"/>
    <property type="match status" value="9"/>
</dbReference>
<dbReference type="PROSITE" id="PS50157">
    <property type="entry name" value="ZINC_FINGER_C2H2_2"/>
    <property type="match status" value="11"/>
</dbReference>
<proteinExistence type="evidence at protein level"/>
<comment type="function">
    <text evidence="5 6 7 8 9 10">Plays a critical role in transcriptional regulation and chromatin remodeling. Acts as a regulator of telomere length (PubMed:28082411, PubMed:28500257). Directly binds the telomeric double-stranded 5'-TTAGGG-3' repeat (PubMed:28082411, PubMed:28500257). Preferentially binds to telomeres that have a low concentration of shelterin complex and acts as a regulator of telomere length by initiating telomere trimming, a process that prevents the accumulation of aberrantly long telomeres (PubMed:28082411). Also acts as a transcription regulator that binds to promoter regions (PubMed:24382891, PubMed:28500257, PubMed:7969177). Regulates expression of a small subset of genes, including MTFP1 (PubMed:28500257). Acts as a negative regulator of cell proliferation by specifically activating expression of ARF, a tumor suppressor isoform of CDKN2A (PubMed:24382891). Acts as a transcription regulator of CIITA, the major factor regulating MHC class II gene expression (PubMed:39562739). In addition, regulates cellular m6A/m6Am methylation on RNA by facilitating the recruitment of the RNA demethylase, FTO, to target mRNAs (PubMed:39300486).</text>
</comment>
<comment type="subunit">
    <text evidence="5">Interacts with EP300 (PubMed:24382891).</text>
</comment>
<comment type="interaction">
    <interactant intactId="EBI-744864">
        <id>P10074</id>
    </interactant>
    <interactant intactId="EBI-739624">
        <id>Q8NHQ1</id>
        <label>CEP70</label>
    </interactant>
    <organismsDiffer>false</organismsDiffer>
    <experiments>3</experiments>
</comment>
<comment type="interaction">
    <interactant intactId="EBI-744864">
        <id>P10074</id>
    </interactant>
    <interactant intactId="EBI-739789">
        <id>Q92997</id>
        <label>DVL3</label>
    </interactant>
    <organismsDiffer>false</organismsDiffer>
    <experiments>4</experiments>
</comment>
<comment type="interaction">
    <interactant intactId="EBI-744864">
        <id>P10074</id>
    </interactant>
    <interactant intactId="EBI-5666657">
        <id>Q9NWQ4</id>
        <label>GPATCH2L</label>
    </interactant>
    <organismsDiffer>false</organismsDiffer>
    <experiments>3</experiments>
</comment>
<comment type="interaction">
    <interactant intactId="EBI-744864">
        <id>P10074</id>
    </interactant>
    <interactant intactId="EBI-11959885">
        <id>Q07627</id>
        <label>KRTAP1-1</label>
    </interactant>
    <organismsDiffer>false</organismsDiffer>
    <experiments>3</experiments>
</comment>
<comment type="interaction">
    <interactant intactId="EBI-744864">
        <id>P10074</id>
    </interactant>
    <interactant intactId="EBI-10172150">
        <id>P60370</id>
        <label>KRTAP10-5</label>
    </interactant>
    <organismsDiffer>false</organismsDiffer>
    <experiments>3</experiments>
</comment>
<comment type="interaction">
    <interactant intactId="EBI-744864">
        <id>P10074</id>
    </interactant>
    <interactant intactId="EBI-10172290">
        <id>P60409</id>
        <label>KRTAP10-7</label>
    </interactant>
    <organismsDiffer>false</organismsDiffer>
    <experiments>3</experiments>
</comment>
<comment type="interaction">
    <interactant intactId="EBI-744864">
        <id>P10074</id>
    </interactant>
    <interactant intactId="EBI-739909">
        <id>Q969R5</id>
        <label>L3MBTL2</label>
    </interactant>
    <organismsDiffer>false</organismsDiffer>
    <experiments>3</experiments>
</comment>
<comment type="interaction">
    <interactant intactId="EBI-744864">
        <id>P10074</id>
    </interactant>
    <interactant intactId="EBI-351935">
        <id>P02545</id>
        <label>LMNA</label>
    </interactant>
    <organismsDiffer>false</organismsDiffer>
    <experiments>3</experiments>
</comment>
<comment type="interaction">
    <interactant intactId="EBI-744864">
        <id>P10074</id>
    </interactant>
    <interactant intactId="EBI-307531">
        <id>P23508</id>
        <label>MCC</label>
    </interactant>
    <organismsDiffer>false</organismsDiffer>
    <experiments>3</experiments>
</comment>
<comment type="interaction">
    <interactant intactId="EBI-744864">
        <id>P10074</id>
    </interactant>
    <interactant intactId="EBI-744782">
        <id>Q9Y5B8</id>
        <label>NME7</label>
    </interactant>
    <organismsDiffer>false</organismsDiffer>
    <experiments>6</experiments>
</comment>
<comment type="interaction">
    <interactant intactId="EBI-744864">
        <id>P10074</id>
    </interactant>
    <interactant intactId="EBI-748974">
        <id>Q96CV9</id>
        <label>OPTN</label>
    </interactant>
    <organismsDiffer>false</organismsDiffer>
    <experiments>3</experiments>
</comment>
<comment type="interaction">
    <interactant intactId="EBI-744864">
        <id>P10074</id>
    </interactant>
    <interactant intactId="EBI-12023934">
        <id>Q5MJ10</id>
        <label>SPANXN2</label>
    </interactant>
    <organismsDiffer>false</organismsDiffer>
    <experiments>3</experiments>
</comment>
<comment type="interaction">
    <interactant intactId="EBI-744864">
        <id>P10074</id>
    </interactant>
    <interactant intactId="EBI-741515">
        <id>Q9NVV9</id>
        <label>THAP1</label>
    </interactant>
    <organismsDiffer>false</organismsDiffer>
    <experiments>3</experiments>
</comment>
<comment type="interaction">
    <interactant intactId="EBI-744864">
        <id>P10074</id>
    </interactant>
    <interactant intactId="EBI-725997">
        <id>Q8WV44</id>
        <label>TRIM41</label>
    </interactant>
    <organismsDiffer>false</organismsDiffer>
    <experiments>4</experiments>
</comment>
<comment type="interaction">
    <interactant intactId="EBI-744864">
        <id>P10074</id>
    </interactant>
    <interactant intactId="EBI-947459">
        <id>Q9H2G4</id>
        <label>TSPYL2</label>
    </interactant>
    <organismsDiffer>false</organismsDiffer>
    <experiments>3</experiments>
</comment>
<comment type="interaction">
    <interactant intactId="EBI-744864">
        <id>P10074</id>
    </interactant>
    <interactant intactId="EBI-540834">
        <id>P61964</id>
        <label>WDR5</label>
    </interactant>
    <organismsDiffer>false</organismsDiffer>
    <experiments>3</experiments>
</comment>
<comment type="interaction">
    <interactant intactId="EBI-744864">
        <id>P10074</id>
    </interactant>
    <interactant intactId="EBI-3918996">
        <id>Q9HCK0</id>
        <label>ZBTB26</label>
    </interactant>
    <organismsDiffer>false</organismsDiffer>
    <experiments>3</experiments>
</comment>
<comment type="interaction">
    <interactant intactId="EBI-744864">
        <id>P10074</id>
    </interactant>
    <interactant intactId="EBI-744864">
        <id>P10074</id>
        <label>ZBTB48</label>
    </interactant>
    <organismsDiffer>false</organismsDiffer>
    <experiments>4</experiments>
</comment>
<comment type="interaction">
    <interactant intactId="EBI-744864">
        <id>P10074</id>
    </interactant>
    <interactant intactId="EBI-7227791">
        <id>Q15916</id>
        <label>ZBTB6</label>
    </interactant>
    <organismsDiffer>false</organismsDiffer>
    <experiments>3</experiments>
</comment>
<comment type="interaction">
    <interactant intactId="EBI-744864">
        <id>P10074</id>
    </interactant>
    <interactant intactId="EBI-742740">
        <id>Q96BR9</id>
        <label>ZBTB8A</label>
    </interactant>
    <organismsDiffer>false</organismsDiffer>
    <experiments>7</experiments>
</comment>
<comment type="interaction">
    <interactant intactId="EBI-744864">
        <id>P10074</id>
    </interactant>
    <interactant intactId="EBI-395708">
        <id>Q96C00</id>
        <label>ZBTB9</label>
    </interactant>
    <organismsDiffer>false</organismsDiffer>
    <experiments>3</experiments>
</comment>
<comment type="interaction">
    <interactant intactId="EBI-744864">
        <id>P10074</id>
    </interactant>
    <interactant intactId="EBI-1210473">
        <id>Q96PQ6</id>
        <label>ZNF317</label>
    </interactant>
    <organismsDiffer>false</organismsDiffer>
    <experiments>3</experiments>
</comment>
<comment type="interaction">
    <interactant intactId="EBI-744864">
        <id>P10074</id>
    </interactant>
    <interactant intactId="EBI-347633">
        <id>Q9H9D4</id>
        <label>ZNF408</label>
    </interactant>
    <organismsDiffer>false</organismsDiffer>
    <experiments>3</experiments>
</comment>
<comment type="interaction">
    <interactant intactId="EBI-744864">
        <id>P10074</id>
    </interactant>
    <interactant intactId="EBI-11962574">
        <id>Q96EG3</id>
        <label>ZNF837</label>
    </interactant>
    <organismsDiffer>false</organismsDiffer>
    <experiments>3</experiments>
</comment>
<comment type="subcellular location">
    <subcellularLocation>
        <location evidence="15">Nucleus</location>
    </subcellularLocation>
    <subcellularLocation>
        <location evidence="6 7">Chromosome</location>
        <location evidence="6 7">Telomere</location>
    </subcellularLocation>
    <text evidence="6 7">Directly binds the telomeric double-stranded 5'-TTAGGG-3' repeat (PubMed:28082411, PubMed:28500257). According to a report, preferentially binds to long telomeres that have a low concentration of shelterin complex, competing with the telomeric repeat binding factors TERF1 and TERF2 (PubMed:28082411). According to another report, binds telomeres regardless of their length (PubMed:28500257).</text>
</comment>
<comment type="tissue specificity">
    <text evidence="11">Detected in adrenal gland and neuroblastoma.</text>
</comment>
<comment type="domain">
    <text evidence="6 7 9">The C2H2-type zinc fingers mediate binding to the telomeric double-stranded 5'-TTAGGG-3' repeats (PubMed:28082411). The last C2H2-type zinc finger is required for telomeric-binding (PubMed:28500257). The two last C2H2-type zinc fingers are required for CIITA promoter III binding (PubMed:39562739).</text>
</comment>
<comment type="similarity">
    <text evidence="15">Belongs to the krueppel C2H2-type zinc-finger protein family.</text>
</comment>
<comment type="caution">
    <text evidence="6 7">According to a study, preferentially binds to long telomeres that have a low concentration of shelterin complex (PubMed:28082411). According to another report, binds telomeres regardless of their length (PubMed:28500257).</text>
</comment>
<reference key="1">
    <citation type="journal article" date="1994" name="Mol. Cell. Biol.">
        <title>A factor that regulates the class II major histocompatibility complex gene DPA is a member of a subfamily of zinc finger proteins that includes a Drosophila developmental control protein.</title>
        <authorList>
            <person name="Sugawara M."/>
            <person name="Scholl T."/>
            <person name="Ponath P.D."/>
            <person name="Strominger J.L."/>
        </authorList>
    </citation>
    <scope>NUCLEOTIDE SEQUENCE [MRNA]</scope>
    <scope>DNA-BINDING</scope>
    <scope>FUNCTION</scope>
</reference>
<reference key="2">
    <citation type="journal article" date="1997" name="Eur. J. Cancer">
        <title>Human Kruppel-related 3 (HKR3): a candidate for the 1p36 neuroblastoma tumour suppressor gene?</title>
        <authorList>
            <person name="Maris J.M."/>
            <person name="Jensen J."/>
            <person name="Sulman E.P."/>
            <person name="Beltinger C.P."/>
            <person name="Allen C."/>
            <person name="Biegel J.A."/>
            <person name="Brodeur G.M."/>
            <person name="White P.S."/>
        </authorList>
    </citation>
    <scope>NUCLEOTIDE SEQUENCE [GENOMIC DNA]</scope>
    <scope>TISSUE SPECIFICITY</scope>
</reference>
<reference key="3">
    <citation type="journal article" date="2006" name="Nature">
        <title>The DNA sequence and biological annotation of human chromosome 1.</title>
        <authorList>
            <person name="Gregory S.G."/>
            <person name="Barlow K.F."/>
            <person name="McLay K.E."/>
            <person name="Kaul R."/>
            <person name="Swarbreck D."/>
            <person name="Dunham A."/>
            <person name="Scott C.E."/>
            <person name="Howe K.L."/>
            <person name="Woodfine K."/>
            <person name="Spencer C.C.A."/>
            <person name="Jones M.C."/>
            <person name="Gillson C."/>
            <person name="Searle S."/>
            <person name="Zhou Y."/>
            <person name="Kokocinski F."/>
            <person name="McDonald L."/>
            <person name="Evans R."/>
            <person name="Phillips K."/>
            <person name="Atkinson A."/>
            <person name="Cooper R."/>
            <person name="Jones C."/>
            <person name="Hall R.E."/>
            <person name="Andrews T.D."/>
            <person name="Lloyd C."/>
            <person name="Ainscough R."/>
            <person name="Almeida J.P."/>
            <person name="Ambrose K.D."/>
            <person name="Anderson F."/>
            <person name="Andrew R.W."/>
            <person name="Ashwell R.I.S."/>
            <person name="Aubin K."/>
            <person name="Babbage A.K."/>
            <person name="Bagguley C.L."/>
            <person name="Bailey J."/>
            <person name="Beasley H."/>
            <person name="Bethel G."/>
            <person name="Bird C.P."/>
            <person name="Bray-Allen S."/>
            <person name="Brown J.Y."/>
            <person name="Brown A.J."/>
            <person name="Buckley D."/>
            <person name="Burton J."/>
            <person name="Bye J."/>
            <person name="Carder C."/>
            <person name="Chapman J.C."/>
            <person name="Clark S.Y."/>
            <person name="Clarke G."/>
            <person name="Clee C."/>
            <person name="Cobley V."/>
            <person name="Collier R.E."/>
            <person name="Corby N."/>
            <person name="Coville G.J."/>
            <person name="Davies J."/>
            <person name="Deadman R."/>
            <person name="Dunn M."/>
            <person name="Earthrowl M."/>
            <person name="Ellington A.G."/>
            <person name="Errington H."/>
            <person name="Frankish A."/>
            <person name="Frankland J."/>
            <person name="French L."/>
            <person name="Garner P."/>
            <person name="Garnett J."/>
            <person name="Gay L."/>
            <person name="Ghori M.R.J."/>
            <person name="Gibson R."/>
            <person name="Gilby L.M."/>
            <person name="Gillett W."/>
            <person name="Glithero R.J."/>
            <person name="Grafham D.V."/>
            <person name="Griffiths C."/>
            <person name="Griffiths-Jones S."/>
            <person name="Grocock R."/>
            <person name="Hammond S."/>
            <person name="Harrison E.S.I."/>
            <person name="Hart E."/>
            <person name="Haugen E."/>
            <person name="Heath P.D."/>
            <person name="Holmes S."/>
            <person name="Holt K."/>
            <person name="Howden P.J."/>
            <person name="Hunt A.R."/>
            <person name="Hunt S.E."/>
            <person name="Hunter G."/>
            <person name="Isherwood J."/>
            <person name="James R."/>
            <person name="Johnson C."/>
            <person name="Johnson D."/>
            <person name="Joy A."/>
            <person name="Kay M."/>
            <person name="Kershaw J.K."/>
            <person name="Kibukawa M."/>
            <person name="Kimberley A.M."/>
            <person name="King A."/>
            <person name="Knights A.J."/>
            <person name="Lad H."/>
            <person name="Laird G."/>
            <person name="Lawlor S."/>
            <person name="Leongamornlert D.A."/>
            <person name="Lloyd D.M."/>
            <person name="Loveland J."/>
            <person name="Lovell J."/>
            <person name="Lush M.J."/>
            <person name="Lyne R."/>
            <person name="Martin S."/>
            <person name="Mashreghi-Mohammadi M."/>
            <person name="Matthews L."/>
            <person name="Matthews N.S.W."/>
            <person name="McLaren S."/>
            <person name="Milne S."/>
            <person name="Mistry S."/>
            <person name="Moore M.J.F."/>
            <person name="Nickerson T."/>
            <person name="O'Dell C.N."/>
            <person name="Oliver K."/>
            <person name="Palmeiri A."/>
            <person name="Palmer S.A."/>
            <person name="Parker A."/>
            <person name="Patel D."/>
            <person name="Pearce A.V."/>
            <person name="Peck A.I."/>
            <person name="Pelan S."/>
            <person name="Phelps K."/>
            <person name="Phillimore B.J."/>
            <person name="Plumb R."/>
            <person name="Rajan J."/>
            <person name="Raymond C."/>
            <person name="Rouse G."/>
            <person name="Saenphimmachak C."/>
            <person name="Sehra H.K."/>
            <person name="Sheridan E."/>
            <person name="Shownkeen R."/>
            <person name="Sims S."/>
            <person name="Skuce C.D."/>
            <person name="Smith M."/>
            <person name="Steward C."/>
            <person name="Subramanian S."/>
            <person name="Sycamore N."/>
            <person name="Tracey A."/>
            <person name="Tromans A."/>
            <person name="Van Helmond Z."/>
            <person name="Wall M."/>
            <person name="Wallis J.M."/>
            <person name="White S."/>
            <person name="Whitehead S.L."/>
            <person name="Wilkinson J.E."/>
            <person name="Willey D.L."/>
            <person name="Williams H."/>
            <person name="Wilming L."/>
            <person name="Wray P.W."/>
            <person name="Wu Z."/>
            <person name="Coulson A."/>
            <person name="Vaudin M."/>
            <person name="Sulston J.E."/>
            <person name="Durbin R.M."/>
            <person name="Hubbard T."/>
            <person name="Wooster R."/>
            <person name="Dunham I."/>
            <person name="Carter N.P."/>
            <person name="McVean G."/>
            <person name="Ross M.T."/>
            <person name="Harrow J."/>
            <person name="Olson M.V."/>
            <person name="Beck S."/>
            <person name="Rogers J."/>
            <person name="Bentley D.R."/>
        </authorList>
    </citation>
    <scope>NUCLEOTIDE SEQUENCE [LARGE SCALE GENOMIC DNA]</scope>
</reference>
<reference key="4">
    <citation type="journal article" date="2004" name="Genome Res.">
        <title>The status, quality, and expansion of the NIH full-length cDNA project: the Mammalian Gene Collection (MGC).</title>
        <authorList>
            <consortium name="The MGC Project Team"/>
        </authorList>
    </citation>
    <scope>NUCLEOTIDE SEQUENCE [LARGE SCALE MRNA]</scope>
    <source>
        <tissue>Uterus</tissue>
    </source>
</reference>
<reference key="5">
    <citation type="journal article" date="1988" name="Mol. Cell. Biol.">
        <title>The GLI-Kruppel family of human genes.</title>
        <authorList>
            <person name="Ruppert J.M."/>
            <person name="Kinzler K.W."/>
            <person name="Wong A.J."/>
            <person name="Bigner S.H."/>
            <person name="Kao F.T."/>
            <person name="Law M.L."/>
            <person name="Seuanez H.N."/>
            <person name="O'Brien S.J."/>
            <person name="Vogelstein B."/>
        </authorList>
    </citation>
    <scope>NUCLEOTIDE SEQUENCE [GENOMIC DNA] OF 461-488</scope>
</reference>
<reference key="6">
    <citation type="journal article" date="2013" name="J. Proteome Res.">
        <title>Toward a comprehensive characterization of a human cancer cell phosphoproteome.</title>
        <authorList>
            <person name="Zhou H."/>
            <person name="Di Palma S."/>
            <person name="Preisinger C."/>
            <person name="Peng M."/>
            <person name="Polat A.N."/>
            <person name="Heck A.J."/>
            <person name="Mohammed S."/>
        </authorList>
    </citation>
    <scope>IDENTIFICATION BY MASS SPECTROMETRY [LARGE SCALE ANALYSIS]</scope>
    <source>
        <tissue>Erythroleukemia</tissue>
    </source>
</reference>
<reference key="7">
    <citation type="journal article" date="2014" name="J. Biol. Chem.">
        <title>Human Kruppel-related 3 (HKR3) is a novel transcription activator of alternate reading frame (ARF) gene.</title>
        <authorList>
            <person name="Yoon J.H."/>
            <person name="Choi W.I."/>
            <person name="Jeon B.N."/>
            <person name="Koh D.I."/>
            <person name="Kim M.K."/>
            <person name="Kim M.H."/>
            <person name="Kim J."/>
            <person name="Hur S.S."/>
            <person name="Kim K.S."/>
            <person name="Hur M.W."/>
        </authorList>
    </citation>
    <scope>FUNCTION</scope>
    <scope>INTERACTION WITH EP300</scope>
</reference>
<reference key="8">
    <citation type="journal article" date="2014" name="J. Proteomics">
        <title>An enzyme assisted RP-RPLC approach for in-depth analysis of human liver phosphoproteome.</title>
        <authorList>
            <person name="Bian Y."/>
            <person name="Song C."/>
            <person name="Cheng K."/>
            <person name="Dong M."/>
            <person name="Wang F."/>
            <person name="Huang J."/>
            <person name="Sun D."/>
            <person name="Wang L."/>
            <person name="Ye M."/>
            <person name="Zou H."/>
        </authorList>
    </citation>
    <scope>PHOSPHORYLATION [LARGE SCALE ANALYSIS] AT SER-169; SER-171 AND SER-179</scope>
    <scope>IDENTIFICATION BY MASS SPECTROMETRY [LARGE SCALE ANALYSIS]</scope>
    <source>
        <tissue>Liver</tissue>
    </source>
</reference>
<reference key="9">
    <citation type="journal article" date="2017" name="EMBO Rep.">
        <title>ZBTB48 is both a vertebrate telomere-binding protein and a transcriptional activator.</title>
        <authorList>
            <person name="Jahn A."/>
            <person name="Rane G."/>
            <person name="Paszkowski-Rogacz M."/>
            <person name="Sayols S."/>
            <person name="Bluhm A."/>
            <person name="Han C.T."/>
            <person name="Draskovic I."/>
            <person name="Londono-Vallejo J.A."/>
            <person name="Kumar A.P."/>
            <person name="Buchholz F."/>
            <person name="Butter F."/>
            <person name="Kappei D."/>
        </authorList>
    </citation>
    <scope>FUNCTION</scope>
    <scope>SUBCELLULAR LOCATION</scope>
    <scope>DOMAIN</scope>
    <scope>MUTAGENESIS OF HIS-596</scope>
</reference>
<reference key="10">
    <citation type="journal article" date="2017" name="Nat. Struct. Mol. Biol.">
        <title>Site-specific mapping of the human SUMO proteome reveals co-modification with phosphorylation.</title>
        <authorList>
            <person name="Hendriks I.A."/>
            <person name="Lyon D."/>
            <person name="Young C."/>
            <person name="Jensen L.J."/>
            <person name="Vertegaal A.C."/>
            <person name="Nielsen M.L."/>
        </authorList>
    </citation>
    <scope>SUMOYLATION [LARGE SCALE ANALYSIS] AT LYS-143 AND LYS-263</scope>
    <scope>IDENTIFICATION BY MASS SPECTROMETRY [LARGE SCALE ANALYSIS]</scope>
</reference>
<reference key="11">
    <citation type="journal article" date="2017" name="Science">
        <title>TZAP: A telomere-associated protein involved in telomere length control.</title>
        <authorList>
            <person name="Li J.S."/>
            <person name="Miralles Fuste J."/>
            <person name="Simavorian T."/>
            <person name="Bartocci C."/>
            <person name="Tsai J."/>
            <person name="Karlseder J."/>
            <person name="Lazzerini Denchi E."/>
        </authorList>
    </citation>
    <scope>FUNCTION</scope>
    <scope>SUBCELLULAR LOCATION</scope>
    <scope>DOMAIN</scope>
</reference>
<reference key="12">
    <citation type="submission" date="2007-11" db="PDB data bank">
        <title>Crystal structure of the human BTB domain of the krueppel-related zinc finger protein 3 (hKR3).</title>
        <authorList>
            <consortium name="Structural genomics consortium (SGC)"/>
        </authorList>
    </citation>
    <scope>X-RAY CRYSTALLOGRAPHY (1.74 ANGSTROMS) OF 2-120</scope>
</reference>
<reference key="13">
    <citation type="journal article" date="2024" name="Genome Biol.">
        <title>Recruitment of the m6A/m6Am demethylase FTO to target RNAs by the telomeric zinc finger protein ZBTB48.</title>
        <authorList>
            <person name="Nabeel-Shah S."/>
            <person name="Pu S."/>
            <person name="Burke G.L."/>
            <person name="Ahmed N."/>
            <person name="Braunschweig U."/>
            <person name="Farhangmehr S."/>
            <person name="Lee H."/>
            <person name="Wu M."/>
            <person name="Ni Z."/>
            <person name="Tang H."/>
            <person name="Zhong G."/>
            <person name="Marcon E."/>
            <person name="Zhang Z."/>
            <person name="Blencowe B.J."/>
            <person name="Greenblatt J.F."/>
        </authorList>
    </citation>
    <scope>FUNCTION</scope>
    <scope>RNA-BINDING</scope>
</reference>
<reference key="14">
    <citation type="journal article" date="2024" name="EMBO J.">
        <title>ZBTB48 is a priming factor regulating B-cell-specific CIITA expression.</title>
        <authorList>
            <person name="Rane G."/>
            <person name="Kuan V.L.S."/>
            <person name="Wang S."/>
            <person name="Mok M.M.H."/>
            <person name="Khanchandani V."/>
            <person name="Hansen J."/>
            <person name="Norvaisaite I."/>
            <person name="Zulkaflee N."/>
            <person name="Yong W.K."/>
            <person name="Jahn A."/>
            <person name="Mukundan V.T."/>
            <person name="Shi Y."/>
            <person name="Osato M."/>
            <person name="Li F."/>
            <person name="Kappei D."/>
        </authorList>
    </citation>
    <scope>X-RAY CRYSTALLOGRAPHY (2.90 ANGSTROMS) OF 516-620 IN COMPLEX WITH CIITA PROMOTER AND ZN(2+)</scope>
    <scope>FUNCTION</scope>
    <scope>DOMAIN</scope>
</reference>
<name>ZBT48_HUMAN</name>
<gene>
    <name evidence="16" type="primary">ZBTB48</name>
    <name evidence="13" type="synonym">HKR3</name>
    <name evidence="12" type="synonym">TZAP</name>
    <name evidence="16" type="synonym">ZNF855</name>
</gene>